<gene>
    <name type="ordered locus">MT0513</name>
</gene>
<dbReference type="EMBL" id="AE000516">
    <property type="protein sequence ID" value="AAK44736.1"/>
    <property type="molecule type" value="Genomic_DNA"/>
</dbReference>
<dbReference type="PIR" id="H70744">
    <property type="entry name" value="H70744"/>
</dbReference>
<dbReference type="SMR" id="P9WKU6"/>
<dbReference type="KEGG" id="mtc:MT0513"/>
<dbReference type="PATRIC" id="fig|83331.31.peg.543"/>
<dbReference type="HOGENOM" id="CLU_088559_0_0_11"/>
<dbReference type="Proteomes" id="UP000001020">
    <property type="component" value="Chromosome"/>
</dbReference>
<proteinExistence type="predicted"/>
<name>Y493_MYCTO</name>
<organism>
    <name type="scientific">Mycobacterium tuberculosis (strain CDC 1551 / Oshkosh)</name>
    <dbReference type="NCBI Taxonomy" id="83331"/>
    <lineage>
        <taxon>Bacteria</taxon>
        <taxon>Bacillati</taxon>
        <taxon>Actinomycetota</taxon>
        <taxon>Actinomycetes</taxon>
        <taxon>Mycobacteriales</taxon>
        <taxon>Mycobacteriaceae</taxon>
        <taxon>Mycobacterium</taxon>
        <taxon>Mycobacterium tuberculosis complex</taxon>
    </lineage>
</organism>
<keyword id="KW-1185">Reference proteome</keyword>
<accession>P9WKU6</accession>
<accession>L0T6N1</accession>
<accession>Q11158</accession>
<protein>
    <recommendedName>
        <fullName>Uncharacterized protein MT0513</fullName>
    </recommendedName>
</protein>
<feature type="chain" id="PRO_0000427592" description="Uncharacterized protein MT0513">
    <location>
        <begin position="1"/>
        <end position="329"/>
    </location>
</feature>
<feature type="region of interest" description="Disordered" evidence="1">
    <location>
        <begin position="1"/>
        <end position="20"/>
    </location>
</feature>
<sequence>MGESTTQPAGGAAVDDETRSAALPRWRGAAGRLEVWYATLSDPLTRTGLWVHCETVAPTTGGPYAHGWVTWFPPDAPPGTERFGPQPAQPAAGPAWFDIAGVRMAPAELTGRTRSLAWELSWKDTAAPLWTFPRVAWERELLPGAQVVIAPTAVFAGSLAVGETTHRVDSWRGSVAHIYGHGNAKRWGWIHADLGDGDVLEVVTAVSHKPGLRRLAPLAFVRFRIDGKDWPASPLPSLRMRTTLGVRHWQLEGRIGGREALIRVDQPPERCVSLGYTDPDGAKAVCTNTEQADIHIELGGRHWSVLGTGHAEVGLRGTAAPAIKEGTPA</sequence>
<reference key="1">
    <citation type="journal article" date="2002" name="J. Bacteriol.">
        <title>Whole-genome comparison of Mycobacterium tuberculosis clinical and laboratory strains.</title>
        <authorList>
            <person name="Fleischmann R.D."/>
            <person name="Alland D."/>
            <person name="Eisen J.A."/>
            <person name="Carpenter L."/>
            <person name="White O."/>
            <person name="Peterson J.D."/>
            <person name="DeBoy R.T."/>
            <person name="Dodson R.J."/>
            <person name="Gwinn M.L."/>
            <person name="Haft D.H."/>
            <person name="Hickey E.K."/>
            <person name="Kolonay J.F."/>
            <person name="Nelson W.C."/>
            <person name="Umayam L.A."/>
            <person name="Ermolaeva M.D."/>
            <person name="Salzberg S.L."/>
            <person name="Delcher A."/>
            <person name="Utterback T.R."/>
            <person name="Weidman J.F."/>
            <person name="Khouri H.M."/>
            <person name="Gill J."/>
            <person name="Mikula A."/>
            <person name="Bishai W."/>
            <person name="Jacobs W.R. Jr."/>
            <person name="Venter J.C."/>
            <person name="Fraser C.M."/>
        </authorList>
    </citation>
    <scope>NUCLEOTIDE SEQUENCE [LARGE SCALE GENOMIC DNA]</scope>
    <source>
        <strain>CDC 1551 / Oshkosh</strain>
    </source>
</reference>
<evidence type="ECO:0000256" key="1">
    <source>
        <dbReference type="SAM" id="MobiDB-lite"/>
    </source>
</evidence>